<evidence type="ECO:0000255" key="1">
    <source>
        <dbReference type="HAMAP-Rule" id="MF_00173"/>
    </source>
</evidence>
<accession>A1RFX7</accession>
<protein>
    <recommendedName>
        <fullName evidence="1">Arginine repressor</fullName>
    </recommendedName>
</protein>
<keyword id="KW-0028">Amino-acid biosynthesis</keyword>
<keyword id="KW-0055">Arginine biosynthesis</keyword>
<keyword id="KW-0963">Cytoplasm</keyword>
<keyword id="KW-0238">DNA-binding</keyword>
<keyword id="KW-0678">Repressor</keyword>
<keyword id="KW-0804">Transcription</keyword>
<keyword id="KW-0805">Transcription regulation</keyword>
<proteinExistence type="inferred from homology"/>
<comment type="function">
    <text evidence="1">Regulates arginine biosynthesis genes.</text>
</comment>
<comment type="pathway">
    <text>Amino-acid biosynthesis; L-arginine biosynthesis [regulation].</text>
</comment>
<comment type="subcellular location">
    <subcellularLocation>
        <location evidence="1">Cytoplasm</location>
    </subcellularLocation>
</comment>
<comment type="similarity">
    <text evidence="1">Belongs to the ArgR family.</text>
</comment>
<sequence>MQTTKNQDDLVRIFKSILKEERFGSQSEIVAALQAEGFGNINQSKVSRMLSKFGAVRTRNAKQEMVYCLPAELGVPTAGSPLKNLVLDVDHNQAMIVVRTSPGAAQLIARLLDSIGKPEGILGTIAGDDTIFICPSSIQDIADTLETIKSLFNYAE</sequence>
<name>ARGR_SHESW</name>
<gene>
    <name evidence="1" type="primary">argR</name>
    <name type="ordered locus">Sputw3181_0721</name>
</gene>
<reference key="1">
    <citation type="submission" date="2006-12" db="EMBL/GenBank/DDBJ databases">
        <title>Complete sequence of Shewanella sp. W3-18-1.</title>
        <authorList>
            <consortium name="US DOE Joint Genome Institute"/>
            <person name="Copeland A."/>
            <person name="Lucas S."/>
            <person name="Lapidus A."/>
            <person name="Barry K."/>
            <person name="Detter J.C."/>
            <person name="Glavina del Rio T."/>
            <person name="Hammon N."/>
            <person name="Israni S."/>
            <person name="Dalin E."/>
            <person name="Tice H."/>
            <person name="Pitluck S."/>
            <person name="Chain P."/>
            <person name="Malfatti S."/>
            <person name="Shin M."/>
            <person name="Vergez L."/>
            <person name="Schmutz J."/>
            <person name="Larimer F."/>
            <person name="Land M."/>
            <person name="Hauser L."/>
            <person name="Kyrpides N."/>
            <person name="Lykidis A."/>
            <person name="Tiedje J."/>
            <person name="Richardson P."/>
        </authorList>
    </citation>
    <scope>NUCLEOTIDE SEQUENCE [LARGE SCALE GENOMIC DNA]</scope>
    <source>
        <strain>W3-18-1</strain>
    </source>
</reference>
<feature type="chain" id="PRO_1000023596" description="Arginine repressor">
    <location>
        <begin position="1"/>
        <end position="156"/>
    </location>
</feature>
<organism>
    <name type="scientific">Shewanella sp. (strain W3-18-1)</name>
    <dbReference type="NCBI Taxonomy" id="351745"/>
    <lineage>
        <taxon>Bacteria</taxon>
        <taxon>Pseudomonadati</taxon>
        <taxon>Pseudomonadota</taxon>
        <taxon>Gammaproteobacteria</taxon>
        <taxon>Alteromonadales</taxon>
        <taxon>Shewanellaceae</taxon>
        <taxon>Shewanella</taxon>
    </lineage>
</organism>
<dbReference type="EMBL" id="CP000503">
    <property type="protein sequence ID" value="ABM23572.1"/>
    <property type="molecule type" value="Genomic_DNA"/>
</dbReference>
<dbReference type="RefSeq" id="WP_011788102.1">
    <property type="nucleotide sequence ID" value="NC_008750.1"/>
</dbReference>
<dbReference type="SMR" id="A1RFX7"/>
<dbReference type="GeneID" id="67444805"/>
<dbReference type="KEGG" id="shw:Sputw3181_0721"/>
<dbReference type="HOGENOM" id="CLU_097103_2_0_6"/>
<dbReference type="UniPathway" id="UPA00068"/>
<dbReference type="Proteomes" id="UP000002597">
    <property type="component" value="Chromosome"/>
</dbReference>
<dbReference type="GO" id="GO:0005737">
    <property type="term" value="C:cytoplasm"/>
    <property type="evidence" value="ECO:0007669"/>
    <property type="project" value="UniProtKB-SubCell"/>
</dbReference>
<dbReference type="GO" id="GO:0034618">
    <property type="term" value="F:arginine binding"/>
    <property type="evidence" value="ECO:0007669"/>
    <property type="project" value="InterPro"/>
</dbReference>
<dbReference type="GO" id="GO:0003677">
    <property type="term" value="F:DNA binding"/>
    <property type="evidence" value="ECO:0007669"/>
    <property type="project" value="UniProtKB-KW"/>
</dbReference>
<dbReference type="GO" id="GO:0003700">
    <property type="term" value="F:DNA-binding transcription factor activity"/>
    <property type="evidence" value="ECO:0007669"/>
    <property type="project" value="UniProtKB-UniRule"/>
</dbReference>
<dbReference type="GO" id="GO:0006526">
    <property type="term" value="P:L-arginine biosynthetic process"/>
    <property type="evidence" value="ECO:0007669"/>
    <property type="project" value="UniProtKB-UniPathway"/>
</dbReference>
<dbReference type="GO" id="GO:0051259">
    <property type="term" value="P:protein complex oligomerization"/>
    <property type="evidence" value="ECO:0007669"/>
    <property type="project" value="InterPro"/>
</dbReference>
<dbReference type="GO" id="GO:1900079">
    <property type="term" value="P:regulation of arginine biosynthetic process"/>
    <property type="evidence" value="ECO:0007669"/>
    <property type="project" value="UniProtKB-UniRule"/>
</dbReference>
<dbReference type="Gene3D" id="3.30.1360.40">
    <property type="match status" value="1"/>
</dbReference>
<dbReference type="Gene3D" id="1.10.10.10">
    <property type="entry name" value="Winged helix-like DNA-binding domain superfamily/Winged helix DNA-binding domain"/>
    <property type="match status" value="1"/>
</dbReference>
<dbReference type="HAMAP" id="MF_00173">
    <property type="entry name" value="Arg_repressor"/>
    <property type="match status" value="1"/>
</dbReference>
<dbReference type="InterPro" id="IPR001669">
    <property type="entry name" value="Arg_repress"/>
</dbReference>
<dbReference type="InterPro" id="IPR020899">
    <property type="entry name" value="Arg_repress_C"/>
</dbReference>
<dbReference type="InterPro" id="IPR036251">
    <property type="entry name" value="Arg_repress_C_sf"/>
</dbReference>
<dbReference type="InterPro" id="IPR020900">
    <property type="entry name" value="Arg_repress_DNA-bd"/>
</dbReference>
<dbReference type="InterPro" id="IPR036388">
    <property type="entry name" value="WH-like_DNA-bd_sf"/>
</dbReference>
<dbReference type="InterPro" id="IPR036390">
    <property type="entry name" value="WH_DNA-bd_sf"/>
</dbReference>
<dbReference type="NCBIfam" id="TIGR01529">
    <property type="entry name" value="argR_whole"/>
    <property type="match status" value="1"/>
</dbReference>
<dbReference type="NCBIfam" id="NF003457">
    <property type="entry name" value="PRK05066.1"/>
    <property type="match status" value="1"/>
</dbReference>
<dbReference type="PANTHER" id="PTHR34471">
    <property type="entry name" value="ARGININE REPRESSOR"/>
    <property type="match status" value="1"/>
</dbReference>
<dbReference type="PANTHER" id="PTHR34471:SF1">
    <property type="entry name" value="ARGININE REPRESSOR"/>
    <property type="match status" value="1"/>
</dbReference>
<dbReference type="Pfam" id="PF01316">
    <property type="entry name" value="Arg_repressor"/>
    <property type="match status" value="1"/>
</dbReference>
<dbReference type="Pfam" id="PF02863">
    <property type="entry name" value="Arg_repressor_C"/>
    <property type="match status" value="1"/>
</dbReference>
<dbReference type="PRINTS" id="PR01467">
    <property type="entry name" value="ARGREPRESSOR"/>
</dbReference>
<dbReference type="SUPFAM" id="SSF55252">
    <property type="entry name" value="C-terminal domain of arginine repressor"/>
    <property type="match status" value="1"/>
</dbReference>
<dbReference type="SUPFAM" id="SSF46785">
    <property type="entry name" value="Winged helix' DNA-binding domain"/>
    <property type="match status" value="1"/>
</dbReference>